<protein>
    <recommendedName>
        <fullName evidence="1">Cyanate hydratase</fullName>
        <shortName evidence="1">Cyanase</shortName>
        <ecNumber evidence="1">4.2.1.104</ecNumber>
    </recommendedName>
    <alternativeName>
        <fullName evidence="1">Cyanate hydrolase</fullName>
    </alternativeName>
    <alternativeName>
        <fullName evidence="1">Cyanate lyase</fullName>
    </alternativeName>
</protein>
<organism>
    <name type="scientific">Ricinus communis</name>
    <name type="common">Castor bean</name>
    <dbReference type="NCBI Taxonomy" id="3988"/>
    <lineage>
        <taxon>Eukaryota</taxon>
        <taxon>Viridiplantae</taxon>
        <taxon>Streptophyta</taxon>
        <taxon>Embryophyta</taxon>
        <taxon>Tracheophyta</taxon>
        <taxon>Spermatophyta</taxon>
        <taxon>Magnoliopsida</taxon>
        <taxon>eudicotyledons</taxon>
        <taxon>Gunneridae</taxon>
        <taxon>Pentapetalae</taxon>
        <taxon>rosids</taxon>
        <taxon>fabids</taxon>
        <taxon>Malpighiales</taxon>
        <taxon>Euphorbiaceae</taxon>
        <taxon>Acalyphoideae</taxon>
        <taxon>Acalypheae</taxon>
        <taxon>Ricinus</taxon>
    </lineage>
</organism>
<evidence type="ECO:0000255" key="1">
    <source>
        <dbReference type="HAMAP-Rule" id="MF_03139"/>
    </source>
</evidence>
<sequence>MAETKATLTNRLLAVKHNSGKSYSEIAEETGLTNVYVAQLFRRQAQLKPDTALKLRAVLPELSDELLGEMMRPPMRSYDPNLIQEPSVYRLNEAVMHFGESIKEIINEEFGDGIMSAIDFYCSVDKVKGVDGKDRVVVTFDGKYLPYSEQKTEHMVSRLRQNGN</sequence>
<dbReference type="EC" id="4.2.1.104" evidence="1"/>
<dbReference type="EMBL" id="EQ974430">
    <property type="protein sequence ID" value="EEF29508.1"/>
    <property type="molecule type" value="Genomic_DNA"/>
</dbReference>
<dbReference type="RefSeq" id="XP_002532879.1">
    <property type="nucleotide sequence ID" value="XM_002532833.2"/>
</dbReference>
<dbReference type="SMR" id="B9T3R0"/>
<dbReference type="FunCoup" id="B9T3R0">
    <property type="interactions" value="856"/>
</dbReference>
<dbReference type="STRING" id="3988.B9T3R0"/>
<dbReference type="GeneID" id="8281247"/>
<dbReference type="KEGG" id="rcu:8281247"/>
<dbReference type="eggNOG" id="ENOG502RY7W">
    <property type="taxonomic scope" value="Eukaryota"/>
</dbReference>
<dbReference type="InParanoid" id="B9T3R0"/>
<dbReference type="OrthoDB" id="10019422at2759"/>
<dbReference type="Proteomes" id="UP000008311">
    <property type="component" value="Unassembled WGS sequence"/>
</dbReference>
<dbReference type="GO" id="GO:0008824">
    <property type="term" value="F:cyanate hydratase activity"/>
    <property type="evidence" value="ECO:0007669"/>
    <property type="project" value="UniProtKB-UniRule"/>
</dbReference>
<dbReference type="GO" id="GO:0003677">
    <property type="term" value="F:DNA binding"/>
    <property type="evidence" value="ECO:0007669"/>
    <property type="project" value="InterPro"/>
</dbReference>
<dbReference type="GO" id="GO:0009439">
    <property type="term" value="P:cyanate metabolic process"/>
    <property type="evidence" value="ECO:0007669"/>
    <property type="project" value="UniProtKB-UniRule"/>
</dbReference>
<dbReference type="CDD" id="cd00559">
    <property type="entry name" value="Cyanase_C"/>
    <property type="match status" value="1"/>
</dbReference>
<dbReference type="FunFam" id="3.30.1160.10:FF:000002">
    <property type="entry name" value="Cyanate hydratase"/>
    <property type="match status" value="1"/>
</dbReference>
<dbReference type="Gene3D" id="3.30.1160.10">
    <property type="entry name" value="Cyanate lyase, C-terminal domain"/>
    <property type="match status" value="1"/>
</dbReference>
<dbReference type="Gene3D" id="1.10.260.40">
    <property type="entry name" value="lambda repressor-like DNA-binding domains"/>
    <property type="match status" value="1"/>
</dbReference>
<dbReference type="HAMAP" id="MF_00535">
    <property type="entry name" value="Cyanate_hydrat"/>
    <property type="match status" value="1"/>
</dbReference>
<dbReference type="InterPro" id="IPR001387">
    <property type="entry name" value="Cro/C1-type_HTH"/>
</dbReference>
<dbReference type="InterPro" id="IPR008076">
    <property type="entry name" value="Cyanase"/>
</dbReference>
<dbReference type="InterPro" id="IPR003712">
    <property type="entry name" value="Cyanate_lyase_C"/>
</dbReference>
<dbReference type="InterPro" id="IPR036581">
    <property type="entry name" value="Cyanate_lyase_C_sf"/>
</dbReference>
<dbReference type="InterPro" id="IPR010982">
    <property type="entry name" value="Lambda_DNA-bd_dom_sf"/>
</dbReference>
<dbReference type="NCBIfam" id="TIGR00673">
    <property type="entry name" value="cynS"/>
    <property type="match status" value="1"/>
</dbReference>
<dbReference type="PANTHER" id="PTHR34186">
    <property type="entry name" value="CYANATE HYDRATASE"/>
    <property type="match status" value="1"/>
</dbReference>
<dbReference type="PANTHER" id="PTHR34186:SF2">
    <property type="entry name" value="CYANATE HYDRATASE"/>
    <property type="match status" value="1"/>
</dbReference>
<dbReference type="Pfam" id="PF02560">
    <property type="entry name" value="Cyanate_lyase"/>
    <property type="match status" value="1"/>
</dbReference>
<dbReference type="PIRSF" id="PIRSF001263">
    <property type="entry name" value="Cyanate_hydratas"/>
    <property type="match status" value="1"/>
</dbReference>
<dbReference type="PRINTS" id="PR01693">
    <property type="entry name" value="CYANASE"/>
</dbReference>
<dbReference type="SMART" id="SM01116">
    <property type="entry name" value="Cyanate_lyase"/>
    <property type="match status" value="1"/>
</dbReference>
<dbReference type="SUPFAM" id="SSF55234">
    <property type="entry name" value="Cyanase C-terminal domain"/>
    <property type="match status" value="1"/>
</dbReference>
<dbReference type="SUPFAM" id="SSF47413">
    <property type="entry name" value="lambda repressor-like DNA-binding domains"/>
    <property type="match status" value="1"/>
</dbReference>
<accession>B9T3R0</accession>
<gene>
    <name evidence="1" type="primary">CYN</name>
    <name type="ORF">RCOM_0038590</name>
</gene>
<proteinExistence type="inferred from homology"/>
<name>CYNS_RICCO</name>
<feature type="chain" id="PRO_0000403228" description="Cyanate hydratase">
    <location>
        <begin position="1"/>
        <end position="164"/>
    </location>
</feature>
<feature type="active site" evidence="1">
    <location>
        <position position="90"/>
    </location>
</feature>
<feature type="active site" evidence="1">
    <location>
        <position position="93"/>
    </location>
</feature>
<feature type="active site" evidence="1">
    <location>
        <position position="116"/>
    </location>
</feature>
<keyword id="KW-0456">Lyase</keyword>
<keyword id="KW-1185">Reference proteome</keyword>
<comment type="function">
    <text evidence="1">Catalyzes the reaction of cyanate with bicarbonate to produce ammonia and carbon dioxide.</text>
</comment>
<comment type="catalytic activity">
    <reaction evidence="1">
        <text>cyanate + hydrogencarbonate + 3 H(+) = NH4(+) + 2 CO2</text>
        <dbReference type="Rhea" id="RHEA:11120"/>
        <dbReference type="ChEBI" id="CHEBI:15378"/>
        <dbReference type="ChEBI" id="CHEBI:16526"/>
        <dbReference type="ChEBI" id="CHEBI:17544"/>
        <dbReference type="ChEBI" id="CHEBI:28938"/>
        <dbReference type="ChEBI" id="CHEBI:29195"/>
        <dbReference type="EC" id="4.2.1.104"/>
    </reaction>
</comment>
<comment type="similarity">
    <text evidence="1">Belongs to the cyanase family.</text>
</comment>
<reference key="1">
    <citation type="journal article" date="2010" name="Nat. Biotechnol.">
        <title>Draft genome sequence of the oilseed species Ricinus communis.</title>
        <authorList>
            <person name="Chan A.P."/>
            <person name="Crabtree J."/>
            <person name="Zhao Q."/>
            <person name="Lorenzi H."/>
            <person name="Orvis J."/>
            <person name="Puiu D."/>
            <person name="Melake-Berhan A."/>
            <person name="Jones K.M."/>
            <person name="Redman J."/>
            <person name="Chen G."/>
            <person name="Cahoon E.B."/>
            <person name="Gedil M."/>
            <person name="Stanke M."/>
            <person name="Haas B.J."/>
            <person name="Wortman J.R."/>
            <person name="Fraser-Liggett C.M."/>
            <person name="Ravel J."/>
            <person name="Rabinowicz P.D."/>
        </authorList>
    </citation>
    <scope>NUCLEOTIDE SEQUENCE [LARGE SCALE GENOMIC DNA]</scope>
    <source>
        <strain>cv. Hale</strain>
    </source>
</reference>